<sequence>MSFSVEVLAGIAIELQRGIGHQDRFQRLITTLRQVLACDASALLRYESRQFIPLAIDGLAQDVLGRRFTLEGHPRLEAIARAGDVVRFPADSDLPDPYDGLIPGQESLKVHACVGLPLFAGQNLIGALTLDAMTPEQFEVFSDEELRLVAALAAGALSNALLIEQLESQNMLPGSSGVFEPIKETHMIGLSPAMTQLKKEIEIVAGSDLNVLIGGETGTGKELVAKAIHQGSPRAVNPLVYLNCAALPESVAESELFGHVKGAFTGAISNRSGKFEMADNGTLFLDEIGELSLALQAKLLRVLQYGDIQRVGDDRSLRVDVRVLAATNRDLREEVLTGRFRADLFHRLSVFPLFVPPLRERGDDVVLLAGYFCEQCRLRLGLSRVVLSPDARRHLLNYGWPGNVRELEHAIHRAVVLARATRAGDEVILEAQHFALPEDVLPAPPAESFLALPTCRNLRESTENFQREMIRQALAQNNHNWAASARALETDVANLHRLAKRLGLKD</sequence>
<comment type="function">
    <text evidence="1">Required for the expression of anaerobic nitric oxide (NO) reductase, acts as a transcriptional activator for at least the norVW operon. Activation also requires sigma-54.</text>
</comment>
<comment type="pathway">
    <text evidence="1">Nitrogen metabolism; nitric oxide reduction.</text>
</comment>
<evidence type="ECO:0000255" key="1">
    <source>
        <dbReference type="HAMAP-Rule" id="MF_01314"/>
    </source>
</evidence>
<protein>
    <recommendedName>
        <fullName evidence="1">Anaerobic nitric oxide reductase transcription regulator NorR</fullName>
    </recommendedName>
</protein>
<feature type="chain" id="PRO_1000141197" description="Anaerobic nitric oxide reductase transcription regulator NorR">
    <location>
        <begin position="1"/>
        <end position="506"/>
    </location>
</feature>
<feature type="domain" description="Sigma-54 factor interaction" evidence="1">
    <location>
        <begin position="187"/>
        <end position="416"/>
    </location>
</feature>
<feature type="DNA-binding region" description="H-T-H motif" evidence="1">
    <location>
        <begin position="481"/>
        <end position="500"/>
    </location>
</feature>
<feature type="binding site" evidence="1">
    <location>
        <begin position="215"/>
        <end position="222"/>
    </location>
    <ligand>
        <name>ATP</name>
        <dbReference type="ChEBI" id="CHEBI:30616"/>
    </ligand>
</feature>
<feature type="binding site" evidence="1">
    <location>
        <begin position="278"/>
        <end position="287"/>
    </location>
    <ligand>
        <name>ATP</name>
        <dbReference type="ChEBI" id="CHEBI:30616"/>
    </ligand>
</feature>
<feature type="modified residue" description="4-aspartylphosphate" evidence="1">
    <location>
        <position position="57"/>
    </location>
</feature>
<gene>
    <name evidence="1" type="primary">norR</name>
    <name type="ordered locus">SeD_A3148</name>
</gene>
<proteinExistence type="inferred from homology"/>
<organism>
    <name type="scientific">Salmonella dublin (strain CT_02021853)</name>
    <dbReference type="NCBI Taxonomy" id="439851"/>
    <lineage>
        <taxon>Bacteria</taxon>
        <taxon>Pseudomonadati</taxon>
        <taxon>Pseudomonadota</taxon>
        <taxon>Gammaproteobacteria</taxon>
        <taxon>Enterobacterales</taxon>
        <taxon>Enterobacteriaceae</taxon>
        <taxon>Salmonella</taxon>
    </lineage>
</organism>
<keyword id="KW-0067">ATP-binding</keyword>
<keyword id="KW-0238">DNA-binding</keyword>
<keyword id="KW-0547">Nucleotide-binding</keyword>
<keyword id="KW-0597">Phosphoprotein</keyword>
<keyword id="KW-0804">Transcription</keyword>
<keyword id="KW-0805">Transcription regulation</keyword>
<dbReference type="EMBL" id="CP001144">
    <property type="protein sequence ID" value="ACH76870.1"/>
    <property type="molecule type" value="Genomic_DNA"/>
</dbReference>
<dbReference type="RefSeq" id="WP_000010818.1">
    <property type="nucleotide sequence ID" value="NC_011205.1"/>
</dbReference>
<dbReference type="SMR" id="B5FSZ0"/>
<dbReference type="KEGG" id="sed:SeD_A3148"/>
<dbReference type="HOGENOM" id="CLU_000445_125_2_6"/>
<dbReference type="UniPathway" id="UPA00638"/>
<dbReference type="Proteomes" id="UP000008322">
    <property type="component" value="Chromosome"/>
</dbReference>
<dbReference type="GO" id="GO:0005524">
    <property type="term" value="F:ATP binding"/>
    <property type="evidence" value="ECO:0007669"/>
    <property type="project" value="UniProtKB-UniRule"/>
</dbReference>
<dbReference type="GO" id="GO:0016887">
    <property type="term" value="F:ATP hydrolysis activity"/>
    <property type="evidence" value="ECO:0007669"/>
    <property type="project" value="InterPro"/>
</dbReference>
<dbReference type="GO" id="GO:0003677">
    <property type="term" value="F:DNA binding"/>
    <property type="evidence" value="ECO:0007669"/>
    <property type="project" value="UniProtKB-KW"/>
</dbReference>
<dbReference type="GO" id="GO:0003700">
    <property type="term" value="F:DNA-binding transcription factor activity"/>
    <property type="evidence" value="ECO:0007669"/>
    <property type="project" value="UniProtKB-UniRule"/>
</dbReference>
<dbReference type="GO" id="GO:0000160">
    <property type="term" value="P:phosphorelay signal transduction system"/>
    <property type="evidence" value="ECO:0007669"/>
    <property type="project" value="UniProtKB-UniRule"/>
</dbReference>
<dbReference type="CDD" id="cd00009">
    <property type="entry name" value="AAA"/>
    <property type="match status" value="1"/>
</dbReference>
<dbReference type="FunFam" id="1.10.8.60:FF:000045">
    <property type="entry name" value="Anaerobic nitric oxide reductase transcription regulator NorR"/>
    <property type="match status" value="1"/>
</dbReference>
<dbReference type="FunFam" id="3.30.450.40:FF:000021">
    <property type="entry name" value="Anaerobic nitric oxide reductase transcription regulator NorR"/>
    <property type="match status" value="1"/>
</dbReference>
<dbReference type="FunFam" id="3.40.50.300:FF:000006">
    <property type="entry name" value="DNA-binding transcriptional regulator NtrC"/>
    <property type="match status" value="1"/>
</dbReference>
<dbReference type="Gene3D" id="1.10.8.60">
    <property type="match status" value="1"/>
</dbReference>
<dbReference type="Gene3D" id="3.30.450.40">
    <property type="match status" value="1"/>
</dbReference>
<dbReference type="Gene3D" id="1.10.10.60">
    <property type="entry name" value="Homeodomain-like"/>
    <property type="match status" value="1"/>
</dbReference>
<dbReference type="Gene3D" id="3.40.50.300">
    <property type="entry name" value="P-loop containing nucleotide triphosphate hydrolases"/>
    <property type="match status" value="1"/>
</dbReference>
<dbReference type="HAMAP" id="MF_01314">
    <property type="entry name" value="NorR"/>
    <property type="match status" value="1"/>
</dbReference>
<dbReference type="InterPro" id="IPR003593">
    <property type="entry name" value="AAA+_ATPase"/>
</dbReference>
<dbReference type="InterPro" id="IPR003018">
    <property type="entry name" value="GAF"/>
</dbReference>
<dbReference type="InterPro" id="IPR029016">
    <property type="entry name" value="GAF-like_dom_sf"/>
</dbReference>
<dbReference type="InterPro" id="IPR009057">
    <property type="entry name" value="Homeodomain-like_sf"/>
</dbReference>
<dbReference type="InterPro" id="IPR023944">
    <property type="entry name" value="NorR"/>
</dbReference>
<dbReference type="InterPro" id="IPR027417">
    <property type="entry name" value="P-loop_NTPase"/>
</dbReference>
<dbReference type="InterPro" id="IPR002078">
    <property type="entry name" value="Sigma_54_int"/>
</dbReference>
<dbReference type="InterPro" id="IPR025662">
    <property type="entry name" value="Sigma_54_int_dom_ATP-bd_1"/>
</dbReference>
<dbReference type="InterPro" id="IPR025943">
    <property type="entry name" value="Sigma_54_int_dom_ATP-bd_2"/>
</dbReference>
<dbReference type="InterPro" id="IPR025944">
    <property type="entry name" value="Sigma_54_int_dom_CS"/>
</dbReference>
<dbReference type="NCBIfam" id="NF003451">
    <property type="entry name" value="PRK05022.1"/>
    <property type="match status" value="1"/>
</dbReference>
<dbReference type="PANTHER" id="PTHR32071:SF35">
    <property type="entry name" value="ANAEROBIC NITRIC OXIDE REDUCTASE TRANSCRIPTION REGULATOR NORR"/>
    <property type="match status" value="1"/>
</dbReference>
<dbReference type="PANTHER" id="PTHR32071">
    <property type="entry name" value="TRANSCRIPTIONAL REGULATORY PROTEIN"/>
    <property type="match status" value="1"/>
</dbReference>
<dbReference type="Pfam" id="PF01590">
    <property type="entry name" value="GAF"/>
    <property type="match status" value="1"/>
</dbReference>
<dbReference type="Pfam" id="PF00158">
    <property type="entry name" value="Sigma54_activat"/>
    <property type="match status" value="1"/>
</dbReference>
<dbReference type="SMART" id="SM00382">
    <property type="entry name" value="AAA"/>
    <property type="match status" value="1"/>
</dbReference>
<dbReference type="SMART" id="SM00065">
    <property type="entry name" value="GAF"/>
    <property type="match status" value="1"/>
</dbReference>
<dbReference type="SUPFAM" id="SSF55781">
    <property type="entry name" value="GAF domain-like"/>
    <property type="match status" value="1"/>
</dbReference>
<dbReference type="SUPFAM" id="SSF46689">
    <property type="entry name" value="Homeodomain-like"/>
    <property type="match status" value="1"/>
</dbReference>
<dbReference type="SUPFAM" id="SSF52540">
    <property type="entry name" value="P-loop containing nucleoside triphosphate hydrolases"/>
    <property type="match status" value="1"/>
</dbReference>
<dbReference type="PROSITE" id="PS00675">
    <property type="entry name" value="SIGMA54_INTERACT_1"/>
    <property type="match status" value="1"/>
</dbReference>
<dbReference type="PROSITE" id="PS00676">
    <property type="entry name" value="SIGMA54_INTERACT_2"/>
    <property type="match status" value="1"/>
</dbReference>
<dbReference type="PROSITE" id="PS00688">
    <property type="entry name" value="SIGMA54_INTERACT_3"/>
    <property type="match status" value="1"/>
</dbReference>
<dbReference type="PROSITE" id="PS50045">
    <property type="entry name" value="SIGMA54_INTERACT_4"/>
    <property type="match status" value="1"/>
</dbReference>
<name>NORR_SALDC</name>
<reference key="1">
    <citation type="journal article" date="2011" name="J. Bacteriol.">
        <title>Comparative genomics of 28 Salmonella enterica isolates: evidence for CRISPR-mediated adaptive sublineage evolution.</title>
        <authorList>
            <person name="Fricke W.F."/>
            <person name="Mammel M.K."/>
            <person name="McDermott P.F."/>
            <person name="Tartera C."/>
            <person name="White D.G."/>
            <person name="Leclerc J.E."/>
            <person name="Ravel J."/>
            <person name="Cebula T.A."/>
        </authorList>
    </citation>
    <scope>NUCLEOTIDE SEQUENCE [LARGE SCALE GENOMIC DNA]</scope>
    <source>
        <strain>CT_02021853</strain>
    </source>
</reference>
<accession>B5FSZ0</accession>